<sequence>MNIEEFDYDLPESLIAQTPLKDRDHSRLLVMDRETGEMKHLHFKDIIEYFRPGDTLVLNDTRVMPARLFGLKEETGAKVEMLMLTQIEGNDWEVLLKPAKRIKVGNKLNFGNGKIIAECIKEMDQGGRIMRLHYEGILQERLDELGEMPLPPYIKERLDDPDRYQTVYAKESGSAAAPTAGLHFTDELLIEIKNKGVNIAFVTLHVGLGTFRPVSVDDVNDHEMHSEYYQMTQETADLLNDTKSKGHRIISVGTTSTRTLETIRRDHDKFVETSGWTNIFIYPGFDFKAIDGQITNFHLPKSTLVMLVSAFSSRENVLNAYKTAVNLEYRFFSFGDAMLII</sequence>
<name>QUEA_STAAT</name>
<proteinExistence type="inferred from homology"/>
<gene>
    <name evidence="1" type="primary">queA</name>
    <name type="ordered locus">USA300HOU_1639</name>
</gene>
<reference key="1">
    <citation type="journal article" date="2007" name="BMC Microbiol.">
        <title>Subtle genetic changes enhance virulence of methicillin resistant and sensitive Staphylococcus aureus.</title>
        <authorList>
            <person name="Highlander S.K."/>
            <person name="Hulten K.G."/>
            <person name="Qin X."/>
            <person name="Jiang H."/>
            <person name="Yerrapragada S."/>
            <person name="Mason E.O. Jr."/>
            <person name="Shang Y."/>
            <person name="Williams T.M."/>
            <person name="Fortunov R.M."/>
            <person name="Liu Y."/>
            <person name="Igboeli O."/>
            <person name="Petrosino J."/>
            <person name="Tirumalai M."/>
            <person name="Uzman A."/>
            <person name="Fox G.E."/>
            <person name="Cardenas A.M."/>
            <person name="Muzny D.M."/>
            <person name="Hemphill L."/>
            <person name="Ding Y."/>
            <person name="Dugan S."/>
            <person name="Blyth P.R."/>
            <person name="Buhay C.J."/>
            <person name="Dinh H.H."/>
            <person name="Hawes A.C."/>
            <person name="Holder M."/>
            <person name="Kovar C.L."/>
            <person name="Lee S.L."/>
            <person name="Liu W."/>
            <person name="Nazareth L.V."/>
            <person name="Wang Q."/>
            <person name="Zhou J."/>
            <person name="Kaplan S.L."/>
            <person name="Weinstock G.M."/>
        </authorList>
    </citation>
    <scope>NUCLEOTIDE SEQUENCE [LARGE SCALE GENOMIC DNA]</scope>
    <source>
        <strain>USA300 / TCH1516</strain>
    </source>
</reference>
<comment type="function">
    <text evidence="1">Transfers and isomerizes the ribose moiety from AdoMet to the 7-aminomethyl group of 7-deazaguanine (preQ1-tRNA) to give epoxyqueuosine (oQ-tRNA).</text>
</comment>
<comment type="catalytic activity">
    <reaction evidence="1">
        <text>7-aminomethyl-7-carbaguanosine(34) in tRNA + S-adenosyl-L-methionine = epoxyqueuosine(34) in tRNA + adenine + L-methionine + 2 H(+)</text>
        <dbReference type="Rhea" id="RHEA:32155"/>
        <dbReference type="Rhea" id="RHEA-COMP:10342"/>
        <dbReference type="Rhea" id="RHEA-COMP:18582"/>
        <dbReference type="ChEBI" id="CHEBI:15378"/>
        <dbReference type="ChEBI" id="CHEBI:16708"/>
        <dbReference type="ChEBI" id="CHEBI:57844"/>
        <dbReference type="ChEBI" id="CHEBI:59789"/>
        <dbReference type="ChEBI" id="CHEBI:82833"/>
        <dbReference type="ChEBI" id="CHEBI:194443"/>
        <dbReference type="EC" id="2.4.99.17"/>
    </reaction>
</comment>
<comment type="pathway">
    <text evidence="1">tRNA modification; tRNA-queuosine biosynthesis.</text>
</comment>
<comment type="subunit">
    <text evidence="1">Monomer.</text>
</comment>
<comment type="subcellular location">
    <subcellularLocation>
        <location evidence="1">Cytoplasm</location>
    </subcellularLocation>
</comment>
<comment type="similarity">
    <text evidence="1">Belongs to the QueA family.</text>
</comment>
<dbReference type="EC" id="2.4.99.17" evidence="1"/>
<dbReference type="EMBL" id="CP000730">
    <property type="protein sequence ID" value="ABX29646.1"/>
    <property type="molecule type" value="Genomic_DNA"/>
</dbReference>
<dbReference type="RefSeq" id="WP_001019172.1">
    <property type="nucleotide sequence ID" value="NC_010079.1"/>
</dbReference>
<dbReference type="SMR" id="A8Z2G8"/>
<dbReference type="KEGG" id="sax:USA300HOU_1639"/>
<dbReference type="HOGENOM" id="CLU_039110_1_0_9"/>
<dbReference type="UniPathway" id="UPA00392"/>
<dbReference type="GO" id="GO:0005737">
    <property type="term" value="C:cytoplasm"/>
    <property type="evidence" value="ECO:0007669"/>
    <property type="project" value="UniProtKB-SubCell"/>
</dbReference>
<dbReference type="GO" id="GO:0051075">
    <property type="term" value="F:S-adenosylmethionine:tRNA ribosyltransferase-isomerase activity"/>
    <property type="evidence" value="ECO:0007669"/>
    <property type="project" value="UniProtKB-EC"/>
</dbReference>
<dbReference type="GO" id="GO:0008616">
    <property type="term" value="P:queuosine biosynthetic process"/>
    <property type="evidence" value="ECO:0007669"/>
    <property type="project" value="UniProtKB-UniRule"/>
</dbReference>
<dbReference type="GO" id="GO:0002099">
    <property type="term" value="P:tRNA wobble guanine modification"/>
    <property type="evidence" value="ECO:0007669"/>
    <property type="project" value="TreeGrafter"/>
</dbReference>
<dbReference type="FunFam" id="2.40.10.240:FF:000002">
    <property type="entry name" value="S-adenosylmethionine:tRNA ribosyltransferase-isomerase"/>
    <property type="match status" value="1"/>
</dbReference>
<dbReference type="FunFam" id="3.40.1780.10:FF:000001">
    <property type="entry name" value="S-adenosylmethionine:tRNA ribosyltransferase-isomerase"/>
    <property type="match status" value="1"/>
</dbReference>
<dbReference type="Gene3D" id="2.40.10.240">
    <property type="entry name" value="QueA-like"/>
    <property type="match status" value="1"/>
</dbReference>
<dbReference type="Gene3D" id="3.40.1780.10">
    <property type="entry name" value="QueA-like"/>
    <property type="match status" value="1"/>
</dbReference>
<dbReference type="HAMAP" id="MF_00113">
    <property type="entry name" value="QueA"/>
    <property type="match status" value="1"/>
</dbReference>
<dbReference type="InterPro" id="IPR003699">
    <property type="entry name" value="QueA"/>
</dbReference>
<dbReference type="InterPro" id="IPR042118">
    <property type="entry name" value="QueA_dom1"/>
</dbReference>
<dbReference type="InterPro" id="IPR042119">
    <property type="entry name" value="QueA_dom2"/>
</dbReference>
<dbReference type="InterPro" id="IPR036100">
    <property type="entry name" value="QueA_sf"/>
</dbReference>
<dbReference type="NCBIfam" id="NF001140">
    <property type="entry name" value="PRK00147.1"/>
    <property type="match status" value="1"/>
</dbReference>
<dbReference type="NCBIfam" id="TIGR00113">
    <property type="entry name" value="queA"/>
    <property type="match status" value="1"/>
</dbReference>
<dbReference type="PANTHER" id="PTHR30307">
    <property type="entry name" value="S-ADENOSYLMETHIONINE:TRNA RIBOSYLTRANSFERASE-ISOMERASE"/>
    <property type="match status" value="1"/>
</dbReference>
<dbReference type="PANTHER" id="PTHR30307:SF0">
    <property type="entry name" value="S-ADENOSYLMETHIONINE:TRNA RIBOSYLTRANSFERASE-ISOMERASE"/>
    <property type="match status" value="1"/>
</dbReference>
<dbReference type="Pfam" id="PF02547">
    <property type="entry name" value="Queuosine_synth"/>
    <property type="match status" value="1"/>
</dbReference>
<dbReference type="SUPFAM" id="SSF111337">
    <property type="entry name" value="QueA-like"/>
    <property type="match status" value="1"/>
</dbReference>
<evidence type="ECO:0000255" key="1">
    <source>
        <dbReference type="HAMAP-Rule" id="MF_00113"/>
    </source>
</evidence>
<organism>
    <name type="scientific">Staphylococcus aureus (strain USA300 / TCH1516)</name>
    <dbReference type="NCBI Taxonomy" id="451516"/>
    <lineage>
        <taxon>Bacteria</taxon>
        <taxon>Bacillati</taxon>
        <taxon>Bacillota</taxon>
        <taxon>Bacilli</taxon>
        <taxon>Bacillales</taxon>
        <taxon>Staphylococcaceae</taxon>
        <taxon>Staphylococcus</taxon>
    </lineage>
</organism>
<protein>
    <recommendedName>
        <fullName evidence="1">S-adenosylmethionine:tRNA ribosyltransferase-isomerase</fullName>
        <ecNumber evidence="1">2.4.99.17</ecNumber>
    </recommendedName>
    <alternativeName>
        <fullName evidence="1">Queuosine biosynthesis protein QueA</fullName>
    </alternativeName>
</protein>
<accession>A8Z2G8</accession>
<keyword id="KW-0963">Cytoplasm</keyword>
<keyword id="KW-0671">Queuosine biosynthesis</keyword>
<keyword id="KW-0949">S-adenosyl-L-methionine</keyword>
<keyword id="KW-0808">Transferase</keyword>
<feature type="chain" id="PRO_1000076024" description="S-adenosylmethionine:tRNA ribosyltransferase-isomerase">
    <location>
        <begin position="1"/>
        <end position="341"/>
    </location>
</feature>